<reference key="1">
    <citation type="journal article" date="1990" name="Nucleic Acids Res.">
        <title>Nucleotide sequence of the mitochondrial genome of Paramecium.</title>
        <authorList>
            <person name="Pritchard A.E."/>
            <person name="Seilhamer J.J."/>
            <person name="Mahalingam R."/>
            <person name="Sable C.L."/>
            <person name="Venuti S.E."/>
            <person name="Cummings D.J."/>
        </authorList>
    </citation>
    <scope>NUCLEOTIDE SEQUENCE [GENOMIC DNA]</scope>
    <source>
        <strain>Stock 51</strain>
    </source>
</reference>
<feature type="chain" id="PRO_0000196865" description="Uncharacterized mitochondrial protein ORF2">
    <location>
        <begin position="1"/>
        <end position="196"/>
    </location>
</feature>
<comment type="subcellular location">
    <subcellularLocation>
        <location evidence="1">Mitochondrion</location>
    </subcellularLocation>
</comment>
<geneLocation type="mitochondrion"/>
<protein>
    <recommendedName>
        <fullName>Uncharacterized mitochondrial protein ORF2</fullName>
    </recommendedName>
</protein>
<proteinExistence type="predicted"/>
<keyword id="KW-0496">Mitochondrion</keyword>
<accession>P15604</accession>
<dbReference type="EMBL" id="X15917">
    <property type="protein sequence ID" value="CAA34037.1"/>
    <property type="molecule type" value="Genomic_DNA"/>
</dbReference>
<dbReference type="PIR" id="S07728">
    <property type="entry name" value="S07728"/>
</dbReference>
<dbReference type="SMR" id="P15604"/>
<dbReference type="GO" id="GO:0005739">
    <property type="term" value="C:mitochondrion"/>
    <property type="evidence" value="ECO:0007669"/>
    <property type="project" value="UniProtKB-SubCell"/>
</dbReference>
<evidence type="ECO:0000305" key="1"/>
<sequence length="196" mass="23365">MLWELLNLLDLRYRFLQQLDLYFLNLNYTLSKLCSKQTEATAPYSKLYYKNLGLAFFYFFFFLLAFLALFIFFFRGFQGTLFFNSVLLSNKGLYFVLFYVAALALLFVFRHHVLKQFFFNNSLDFLIALVFLTLFSTLIFFSNNLFAFFFTLELVAVTNFYFISSAREFFFFEKSQGGASSLKAQKKKTFFNVRFF</sequence>
<organism>
    <name type="scientific">Paramecium tetraurelia</name>
    <dbReference type="NCBI Taxonomy" id="5888"/>
    <lineage>
        <taxon>Eukaryota</taxon>
        <taxon>Sar</taxon>
        <taxon>Alveolata</taxon>
        <taxon>Ciliophora</taxon>
        <taxon>Intramacronucleata</taxon>
        <taxon>Oligohymenophorea</taxon>
        <taxon>Peniculida</taxon>
        <taxon>Parameciidae</taxon>
        <taxon>Paramecium</taxon>
    </lineage>
</organism>
<name>YM02_PARTE</name>